<evidence type="ECO:0000255" key="1">
    <source>
        <dbReference type="HAMAP-Rule" id="MF_01018"/>
    </source>
</evidence>
<reference key="1">
    <citation type="journal article" date="2002" name="Genome Res.">
        <title>A complete sequence of the T. tengcongensis genome.</title>
        <authorList>
            <person name="Bao Q."/>
            <person name="Tian Y."/>
            <person name="Li W."/>
            <person name="Xu Z."/>
            <person name="Xuan Z."/>
            <person name="Hu S."/>
            <person name="Dong W."/>
            <person name="Yang J."/>
            <person name="Chen Y."/>
            <person name="Xue Y."/>
            <person name="Xu Y."/>
            <person name="Lai X."/>
            <person name="Huang L."/>
            <person name="Dong X."/>
            <person name="Ma Y."/>
            <person name="Ling L."/>
            <person name="Tan H."/>
            <person name="Chen R."/>
            <person name="Wang J."/>
            <person name="Yu J."/>
            <person name="Yang H."/>
        </authorList>
    </citation>
    <scope>NUCLEOTIDE SEQUENCE [LARGE SCALE GENOMIC DNA]</scope>
    <source>
        <strain>DSM 15242 / JCM 11007 / NBRC 100824 / MB4</strain>
    </source>
</reference>
<name>HIS1_CALS4</name>
<accession>Q8R881</accession>
<organism>
    <name type="scientific">Caldanaerobacter subterraneus subsp. tengcongensis (strain DSM 15242 / JCM 11007 / NBRC 100824 / MB4)</name>
    <name type="common">Thermoanaerobacter tengcongensis</name>
    <dbReference type="NCBI Taxonomy" id="273068"/>
    <lineage>
        <taxon>Bacteria</taxon>
        <taxon>Bacillati</taxon>
        <taxon>Bacillota</taxon>
        <taxon>Clostridia</taxon>
        <taxon>Thermoanaerobacterales</taxon>
        <taxon>Thermoanaerobacteraceae</taxon>
        <taxon>Caldanaerobacter</taxon>
    </lineage>
</organism>
<protein>
    <recommendedName>
        <fullName evidence="1">ATP phosphoribosyltransferase</fullName>
        <shortName evidence="1">ATP-PRT</shortName>
        <shortName evidence="1">ATP-PRTase</shortName>
        <ecNumber evidence="1">2.4.2.17</ecNumber>
    </recommendedName>
</protein>
<proteinExistence type="inferred from homology"/>
<dbReference type="EC" id="2.4.2.17" evidence="1"/>
<dbReference type="EMBL" id="AE008691">
    <property type="protein sequence ID" value="AAM25304.1"/>
    <property type="molecule type" value="Genomic_DNA"/>
</dbReference>
<dbReference type="RefSeq" id="WP_009610411.1">
    <property type="nucleotide sequence ID" value="NC_003869.1"/>
</dbReference>
<dbReference type="SMR" id="Q8R881"/>
<dbReference type="STRING" id="273068.TTE2139"/>
<dbReference type="KEGG" id="tte:TTE2139"/>
<dbReference type="eggNOG" id="COG0040">
    <property type="taxonomic scope" value="Bacteria"/>
</dbReference>
<dbReference type="HOGENOM" id="CLU_038115_2_0_9"/>
<dbReference type="OrthoDB" id="9801867at2"/>
<dbReference type="UniPathway" id="UPA00031">
    <property type="reaction ID" value="UER00006"/>
</dbReference>
<dbReference type="Proteomes" id="UP000000555">
    <property type="component" value="Chromosome"/>
</dbReference>
<dbReference type="GO" id="GO:0005737">
    <property type="term" value="C:cytoplasm"/>
    <property type="evidence" value="ECO:0007669"/>
    <property type="project" value="UniProtKB-SubCell"/>
</dbReference>
<dbReference type="GO" id="GO:0005524">
    <property type="term" value="F:ATP binding"/>
    <property type="evidence" value="ECO:0007669"/>
    <property type="project" value="UniProtKB-KW"/>
</dbReference>
<dbReference type="GO" id="GO:0003879">
    <property type="term" value="F:ATP phosphoribosyltransferase activity"/>
    <property type="evidence" value="ECO:0007669"/>
    <property type="project" value="UniProtKB-UniRule"/>
</dbReference>
<dbReference type="GO" id="GO:0000105">
    <property type="term" value="P:L-histidine biosynthetic process"/>
    <property type="evidence" value="ECO:0007669"/>
    <property type="project" value="UniProtKB-UniRule"/>
</dbReference>
<dbReference type="CDD" id="cd13595">
    <property type="entry name" value="PBP2_HisGs"/>
    <property type="match status" value="1"/>
</dbReference>
<dbReference type="FunFam" id="3.40.190.10:FF:000008">
    <property type="entry name" value="ATP phosphoribosyltransferase"/>
    <property type="match status" value="1"/>
</dbReference>
<dbReference type="Gene3D" id="3.40.190.10">
    <property type="entry name" value="Periplasmic binding protein-like II"/>
    <property type="match status" value="2"/>
</dbReference>
<dbReference type="HAMAP" id="MF_01018">
    <property type="entry name" value="HisG_Short"/>
    <property type="match status" value="1"/>
</dbReference>
<dbReference type="InterPro" id="IPR013820">
    <property type="entry name" value="ATP_PRibTrfase_cat"/>
</dbReference>
<dbReference type="InterPro" id="IPR018198">
    <property type="entry name" value="ATP_PRibTrfase_CS"/>
</dbReference>
<dbReference type="InterPro" id="IPR001348">
    <property type="entry name" value="ATP_PRibTrfase_HisG"/>
</dbReference>
<dbReference type="InterPro" id="IPR024893">
    <property type="entry name" value="ATP_PRibTrfase_HisG_short"/>
</dbReference>
<dbReference type="NCBIfam" id="TIGR00070">
    <property type="entry name" value="hisG"/>
    <property type="match status" value="1"/>
</dbReference>
<dbReference type="PANTHER" id="PTHR21403:SF8">
    <property type="entry name" value="ATP PHOSPHORIBOSYLTRANSFERASE"/>
    <property type="match status" value="1"/>
</dbReference>
<dbReference type="PANTHER" id="PTHR21403">
    <property type="entry name" value="ATP PHOSPHORIBOSYLTRANSFERASE ATP-PRTASE"/>
    <property type="match status" value="1"/>
</dbReference>
<dbReference type="Pfam" id="PF01634">
    <property type="entry name" value="HisG"/>
    <property type="match status" value="1"/>
</dbReference>
<dbReference type="SUPFAM" id="SSF53850">
    <property type="entry name" value="Periplasmic binding protein-like II"/>
    <property type="match status" value="1"/>
</dbReference>
<dbReference type="PROSITE" id="PS01316">
    <property type="entry name" value="ATP_P_PHORIBOSYLTR"/>
    <property type="match status" value="1"/>
</dbReference>
<sequence>MDIVSIALPKGRMTEDAVVLFKKAGISNDVLKDISRKLILEDNKNAIKFMLVKPMDVPTYVEHGAADLGVCGKDILLEQKKDLYEVLDLKFGFCRMVVAGPPNVKDSFLTNKRVATKFPNVAEEFFKKKGENVEIIKLNGSVELAPIVGLSEVIVDIVETGRTLRENGLVVIEEIFPSTARLIVNKASMKTKSERIKDIILKLREVINGG</sequence>
<comment type="function">
    <text evidence="1">Catalyzes the condensation of ATP and 5-phosphoribose 1-diphosphate to form N'-(5'-phosphoribosyl)-ATP (PR-ATP). Has a crucial role in the pathway because the rate of histidine biosynthesis seems to be controlled primarily by regulation of HisG enzymatic activity.</text>
</comment>
<comment type="catalytic activity">
    <reaction evidence="1">
        <text>1-(5-phospho-beta-D-ribosyl)-ATP + diphosphate = 5-phospho-alpha-D-ribose 1-diphosphate + ATP</text>
        <dbReference type="Rhea" id="RHEA:18473"/>
        <dbReference type="ChEBI" id="CHEBI:30616"/>
        <dbReference type="ChEBI" id="CHEBI:33019"/>
        <dbReference type="ChEBI" id="CHEBI:58017"/>
        <dbReference type="ChEBI" id="CHEBI:73183"/>
        <dbReference type="EC" id="2.4.2.17"/>
    </reaction>
</comment>
<comment type="pathway">
    <text evidence="1">Amino-acid biosynthesis; L-histidine biosynthesis; L-histidine from 5-phospho-alpha-D-ribose 1-diphosphate: step 1/9.</text>
</comment>
<comment type="subunit">
    <text evidence="1">Heteromultimer composed of HisG and HisZ subunits.</text>
</comment>
<comment type="subcellular location">
    <subcellularLocation>
        <location evidence="1">Cytoplasm</location>
    </subcellularLocation>
</comment>
<comment type="domain">
    <text>Lacks the C-terminal regulatory region which is replaced by HisZ.</text>
</comment>
<comment type="similarity">
    <text evidence="1">Belongs to the ATP phosphoribosyltransferase family. Short subfamily.</text>
</comment>
<gene>
    <name evidence="1" type="primary">hisG</name>
    <name type="ordered locus">TTE2139</name>
</gene>
<feature type="chain" id="PRO_0000151946" description="ATP phosphoribosyltransferase">
    <location>
        <begin position="1"/>
        <end position="210"/>
    </location>
</feature>
<keyword id="KW-0028">Amino-acid biosynthesis</keyword>
<keyword id="KW-0067">ATP-binding</keyword>
<keyword id="KW-0963">Cytoplasm</keyword>
<keyword id="KW-0328">Glycosyltransferase</keyword>
<keyword id="KW-0368">Histidine biosynthesis</keyword>
<keyword id="KW-0547">Nucleotide-binding</keyword>
<keyword id="KW-1185">Reference proteome</keyword>
<keyword id="KW-0808">Transferase</keyword>